<gene>
    <name evidence="12" type="primary">HARS1</name>
    <name type="synonym">HARS</name>
    <name type="synonym">HRS</name>
</gene>
<comment type="function">
    <text evidence="6 7">Catalyzes the ATP-dependent ligation of histidine to the 3'-end of its cognate tRNA, via the formation of an aminoacyl-adenylate intermediate (His-AMP) (PubMed:29235198). Plays a role in axon guidance (PubMed:26072516).</text>
</comment>
<comment type="catalytic activity">
    <reaction evidence="7">
        <text>tRNA(His) + L-histidine + ATP = L-histidyl-tRNA(His) + AMP + diphosphate + H(+)</text>
        <dbReference type="Rhea" id="RHEA:17313"/>
        <dbReference type="Rhea" id="RHEA-COMP:9665"/>
        <dbReference type="Rhea" id="RHEA-COMP:9689"/>
        <dbReference type="ChEBI" id="CHEBI:15378"/>
        <dbReference type="ChEBI" id="CHEBI:30616"/>
        <dbReference type="ChEBI" id="CHEBI:33019"/>
        <dbReference type="ChEBI" id="CHEBI:57595"/>
        <dbReference type="ChEBI" id="CHEBI:78442"/>
        <dbReference type="ChEBI" id="CHEBI:78527"/>
        <dbReference type="ChEBI" id="CHEBI:456215"/>
        <dbReference type="EC" id="6.1.1.21"/>
    </reaction>
</comment>
<comment type="biophysicochemical properties">
    <kinetics>
        <KM evidence="7">8 uM for histidine</KM>
        <KM evidence="7">0.872 uM for tRNA(His)</KM>
        <KM evidence="7">44.2 uM for ATP</KM>
        <text evidence="7">kcat is 5.4 sec(-1) for aminoacylation of tRNA(His) (PubMed:29235198). kcat is 4.1 sec(-1) for histidine. (PubMed:29235198). kcat is 5.8 sec(-1) for ATP (PubMed:29235198).</text>
    </kinetics>
</comment>
<comment type="subunit">
    <text evidence="5 7 8">Homodimer.</text>
</comment>
<comment type="interaction">
    <interactant intactId="EBI-1057566">
        <id>P12081</id>
    </interactant>
    <interactant intactId="EBI-1057566">
        <id>P12081</id>
        <label>HARS1</label>
    </interactant>
    <organismsDiffer>false</organismsDiffer>
    <experiments>2</experiments>
</comment>
<comment type="subcellular location">
    <subcellularLocation>
        <location evidence="1">Cytoplasm</location>
    </subcellularLocation>
</comment>
<comment type="alternative products">
    <event type="alternative splicing"/>
    <isoform>
        <id>P12081-1</id>
        <name>1</name>
        <sequence type="displayed"/>
    </isoform>
    <isoform>
        <id>P12081-2</id>
        <name>2</name>
        <sequence type="described" ref="VSP_045118"/>
    </isoform>
    <isoform>
        <id>P12081-3</id>
        <name>3</name>
        <sequence type="described" ref="VSP_045118 VSP_046662"/>
    </isoform>
    <isoform>
        <id>P12081-4</id>
        <name>4</name>
        <sequence type="described" ref="VSP_046662"/>
    </isoform>
</comment>
<comment type="tissue specificity">
    <text>Brain, heart, liver and kidney.</text>
</comment>
<comment type="disease" evidence="3">
    <disease id="DI-03383">
        <name>Usher syndrome 3B</name>
        <acronym>USH3B</acronym>
        <description>A syndrome characterized by progressive vision and hearing loss during early childhood. Some patients have the so-called 'Charles Bonnet syndrome,' involving decreased visual acuity and vivid visual hallucinations. USH is a genetically heterogeneous condition characterized by the association of retinitis pigmentosa with sensorineural deafness. Age at onset and differences in auditory and vestibular function distinguish Usher syndrome type 1 (USH1), Usher syndrome type 2 (USH2) and Usher syndrome type 3 (USH3). USH3 is characterized by postlingual, progressive hearing loss, variable vestibular dysfunction, and onset of retinitis pigmentosa symptoms, including nyctalopia, constriction of the visual fields, and loss of central visual acuity, usually by the second decade of life.</description>
        <dbReference type="MIM" id="614504"/>
    </disease>
    <text>The disease may be caused by variants affecting the gene represented in this entry.</text>
</comment>
<comment type="disease" evidence="4 6 7">
    <disease id="DI-04574">
        <name>Charcot-Marie-Tooth disease, axonal, type 2W</name>
        <acronym>CMT2W</acronym>
        <description>An autosomal dominant, axonal form of Charcot-Marie-Tooth disease, a disorder of the peripheral nervous system, characterized by progressive weakness and atrophy, initially of the peroneal muscles and later of the distal muscles of the arms. Charcot-Marie-Tooth disease is classified in two main groups on the basis of electrophysiologic properties and histopathology: primary peripheral demyelinating neuropathies (designated CMT1 when they are dominantly inherited) and primary peripheral axonal neuropathies (CMT2). Neuropathies of the CMT2 group are characterized by signs of axonal degeneration in the absence of obvious myelin alterations, normal or slightly reduced nerve conduction velocities, and progressive distal muscle weakness and atrophy. CMT2W patients manifest a peripheral neuropathy mainly affecting the lower limbs and resulting in gait difficulties and distal sensory impairment. Most patients also have upper limb involvement.</description>
        <dbReference type="MIM" id="616625"/>
    </disease>
    <text>The disease is caused by variants affecting the gene represented in this entry.</text>
</comment>
<comment type="similarity">
    <text evidence="11">Belongs to the class-II aminoacyl-tRNA synthetase family.</text>
</comment>
<comment type="sequence caution" evidence="11">
    <conflict type="frameshift">
        <sequence resource="EMBL-CDS" id="CAA28956"/>
    </conflict>
</comment>
<dbReference type="EC" id="6.1.1.21" evidence="7"/>
<dbReference type="EMBL" id="Z11518">
    <property type="protein sequence ID" value="CAA77607.1"/>
    <property type="molecule type" value="mRNA"/>
</dbReference>
<dbReference type="EMBL" id="X05345">
    <property type="protein sequence ID" value="CAA28956.1"/>
    <property type="status" value="ALT_FRAME"/>
    <property type="molecule type" value="mRNA"/>
</dbReference>
<dbReference type="EMBL" id="AK295219">
    <property type="protein sequence ID" value="BAG58213.1"/>
    <property type="molecule type" value="mRNA"/>
</dbReference>
<dbReference type="EMBL" id="AK302295">
    <property type="protein sequence ID" value="BAG63635.1"/>
    <property type="molecule type" value="mRNA"/>
</dbReference>
<dbReference type="EMBL" id="AK225776">
    <property type="status" value="NOT_ANNOTATED_CDS"/>
    <property type="molecule type" value="mRNA"/>
</dbReference>
<dbReference type="EMBL" id="AC116353">
    <property type="status" value="NOT_ANNOTATED_CDS"/>
    <property type="molecule type" value="Genomic_DNA"/>
</dbReference>
<dbReference type="EMBL" id="BC011807">
    <property type="protein sequence ID" value="AAH11807.1"/>
    <property type="molecule type" value="mRNA"/>
</dbReference>
<dbReference type="EMBL" id="BC080514">
    <property type="protein sequence ID" value="AAH80514.1"/>
    <property type="molecule type" value="mRNA"/>
</dbReference>
<dbReference type="EMBL" id="M96646">
    <property type="protein sequence ID" value="AAA58668.1"/>
    <property type="molecule type" value="Genomic_DNA"/>
</dbReference>
<dbReference type="EMBL" id="U18936">
    <property type="protein sequence ID" value="AAA73973.1"/>
    <property type="molecule type" value="Genomic_DNA"/>
</dbReference>
<dbReference type="CCDS" id="CCDS4237.1">
    <molecule id="P12081-1"/>
</dbReference>
<dbReference type="CCDS" id="CCDS58976.1">
    <molecule id="P12081-2"/>
</dbReference>
<dbReference type="CCDS" id="CCDS58977.1">
    <molecule id="P12081-3"/>
</dbReference>
<dbReference type="CCDS" id="CCDS58978.1">
    <molecule id="P12081-4"/>
</dbReference>
<dbReference type="PIR" id="I37559">
    <property type="entry name" value="SYHUHT"/>
</dbReference>
<dbReference type="RefSeq" id="NP_001244969.1">
    <molecule id="P12081-2"/>
    <property type="nucleotide sequence ID" value="NM_001258040.3"/>
</dbReference>
<dbReference type="RefSeq" id="NP_001244970.1">
    <molecule id="P12081-4"/>
    <property type="nucleotide sequence ID" value="NM_001258041.3"/>
</dbReference>
<dbReference type="RefSeq" id="NP_001244971.1">
    <molecule id="P12081-3"/>
    <property type="nucleotide sequence ID" value="NM_001258042.3"/>
</dbReference>
<dbReference type="RefSeq" id="NP_002100.2">
    <molecule id="P12081-1"/>
    <property type="nucleotide sequence ID" value="NM_002109.5"/>
</dbReference>
<dbReference type="PDB" id="1X59">
    <property type="method" value="NMR"/>
    <property type="chains" value="A=1-60"/>
</dbReference>
<dbReference type="PDB" id="2LW7">
    <property type="method" value="NMR"/>
    <property type="chains" value="A=2-60, A=399-509"/>
</dbReference>
<dbReference type="PDB" id="4G84">
    <property type="method" value="X-ray"/>
    <property type="resolution" value="2.40 A"/>
    <property type="chains" value="A/B=54-506"/>
</dbReference>
<dbReference type="PDB" id="4G85">
    <property type="method" value="X-ray"/>
    <property type="resolution" value="3.11 A"/>
    <property type="chains" value="A/B=1-506"/>
</dbReference>
<dbReference type="PDB" id="4PHC">
    <property type="method" value="X-ray"/>
    <property type="resolution" value="2.84 A"/>
    <property type="chains" value="A/B/C/D=1-509"/>
</dbReference>
<dbReference type="PDB" id="4X5O">
    <property type="method" value="X-ray"/>
    <property type="resolution" value="2.80 A"/>
    <property type="chains" value="A/B=1-509"/>
</dbReference>
<dbReference type="PDB" id="5W6M">
    <property type="method" value="X-ray"/>
    <property type="resolution" value="3.70 A"/>
    <property type="chains" value="A/B=54-503"/>
</dbReference>
<dbReference type="PDB" id="6O76">
    <property type="method" value="X-ray"/>
    <property type="resolution" value="2.79 A"/>
    <property type="chains" value="A/B=1-509"/>
</dbReference>
<dbReference type="PDB" id="8YOR">
    <property type="method" value="X-ray"/>
    <property type="resolution" value="2.30 A"/>
    <property type="chains" value="E/F=1-60"/>
</dbReference>
<dbReference type="PDB" id="8YP1">
    <property type="method" value="X-ray"/>
    <property type="resolution" value="2.79 A"/>
    <property type="chains" value="A/B/C/D=2-60"/>
</dbReference>
<dbReference type="PDBsum" id="1X59"/>
<dbReference type="PDBsum" id="2LW7"/>
<dbReference type="PDBsum" id="4G84"/>
<dbReference type="PDBsum" id="4G85"/>
<dbReference type="PDBsum" id="4PHC"/>
<dbReference type="PDBsum" id="4X5O"/>
<dbReference type="PDBsum" id="5W6M"/>
<dbReference type="PDBsum" id="6O76"/>
<dbReference type="PDBsum" id="8YOR"/>
<dbReference type="PDBsum" id="8YP1"/>
<dbReference type="SMR" id="P12081"/>
<dbReference type="BioGRID" id="109285">
    <property type="interactions" value="122"/>
</dbReference>
<dbReference type="DIP" id="DIP-37596N"/>
<dbReference type="FunCoup" id="P12081">
    <property type="interactions" value="3468"/>
</dbReference>
<dbReference type="IntAct" id="P12081">
    <property type="interactions" value="21"/>
</dbReference>
<dbReference type="MINT" id="P12081"/>
<dbReference type="STRING" id="9606.ENSP00000425634"/>
<dbReference type="BindingDB" id="P12081"/>
<dbReference type="ChEMBL" id="CHEMBL4002"/>
<dbReference type="DrugBank" id="DB00117">
    <property type="generic name" value="Histidine"/>
</dbReference>
<dbReference type="GlyGen" id="P12081">
    <property type="glycosylation" value="1 site, 1 O-linked glycan (1 site)"/>
</dbReference>
<dbReference type="iPTMnet" id="P12081"/>
<dbReference type="MetOSite" id="P12081"/>
<dbReference type="PhosphoSitePlus" id="P12081"/>
<dbReference type="SwissPalm" id="P12081"/>
<dbReference type="BioMuta" id="HARS"/>
<dbReference type="DMDM" id="135123"/>
<dbReference type="jPOST" id="P12081"/>
<dbReference type="MassIVE" id="P12081"/>
<dbReference type="PaxDb" id="9606-ENSP00000425634"/>
<dbReference type="PeptideAtlas" id="P12081"/>
<dbReference type="ProteomicsDB" id="14349"/>
<dbReference type="ProteomicsDB" id="52824">
    <molecule id="P12081-1"/>
</dbReference>
<dbReference type="ProteomicsDB" id="5502"/>
<dbReference type="Pumba" id="P12081"/>
<dbReference type="ABCD" id="P12081">
    <property type="antibodies" value="2 sequenced antibodies"/>
</dbReference>
<dbReference type="Antibodypedia" id="15372">
    <property type="antibodies" value="301 antibodies from 33 providers"/>
</dbReference>
<dbReference type="DNASU" id="3035"/>
<dbReference type="Ensembl" id="ENST00000307633.7">
    <molecule id="P12081-3"/>
    <property type="protein sequence ID" value="ENSP00000304668.3"/>
    <property type="gene ID" value="ENSG00000170445.16"/>
</dbReference>
<dbReference type="Ensembl" id="ENST00000438307.6">
    <molecule id="P12081-2"/>
    <property type="protein sequence ID" value="ENSP00000411511.2"/>
    <property type="gene ID" value="ENSG00000170445.16"/>
</dbReference>
<dbReference type="Ensembl" id="ENST00000457527.6">
    <molecule id="P12081-4"/>
    <property type="protein sequence ID" value="ENSP00000387893.2"/>
    <property type="gene ID" value="ENSG00000170445.16"/>
</dbReference>
<dbReference type="Ensembl" id="ENST00000504156.7">
    <molecule id="P12081-1"/>
    <property type="protein sequence ID" value="ENSP00000425634.1"/>
    <property type="gene ID" value="ENSG00000170445.16"/>
</dbReference>
<dbReference type="GeneID" id="3035"/>
<dbReference type="KEGG" id="hsa:3035"/>
<dbReference type="MANE-Select" id="ENST00000504156.7">
    <property type="protein sequence ID" value="ENSP00000425634.1"/>
    <property type="RefSeq nucleotide sequence ID" value="NM_002109.6"/>
    <property type="RefSeq protein sequence ID" value="NP_002100.2"/>
</dbReference>
<dbReference type="UCSC" id="uc003lgv.6">
    <molecule id="P12081-1"/>
    <property type="organism name" value="human"/>
</dbReference>
<dbReference type="AGR" id="HGNC:4816"/>
<dbReference type="CTD" id="3035"/>
<dbReference type="DisGeNET" id="3035"/>
<dbReference type="GeneCards" id="HARS1"/>
<dbReference type="GeneReviews" id="HARS1"/>
<dbReference type="HGNC" id="HGNC:4816">
    <property type="gene designation" value="HARS1"/>
</dbReference>
<dbReference type="HPA" id="ENSG00000170445">
    <property type="expression patterns" value="Low tissue specificity"/>
</dbReference>
<dbReference type="MalaCards" id="HARS1"/>
<dbReference type="MIM" id="142810">
    <property type="type" value="gene"/>
</dbReference>
<dbReference type="MIM" id="614504">
    <property type="type" value="phenotype"/>
</dbReference>
<dbReference type="MIM" id="616625">
    <property type="type" value="phenotype"/>
</dbReference>
<dbReference type="neXtProt" id="NX_P12081"/>
<dbReference type="OpenTargets" id="ENSG00000170445"/>
<dbReference type="Orphanet" id="488333">
    <property type="disease" value="Autosomal dominant Charcot-Marie-Tooth disease type 2W"/>
</dbReference>
<dbReference type="Orphanet" id="231183">
    <property type="disease" value="Usher syndrome type 3"/>
</dbReference>
<dbReference type="PharmGKB" id="PA29191"/>
<dbReference type="VEuPathDB" id="HostDB:ENSG00000170445"/>
<dbReference type="eggNOG" id="KOG1936">
    <property type="taxonomic scope" value="Eukaryota"/>
</dbReference>
<dbReference type="GeneTree" id="ENSGT00390000005922"/>
<dbReference type="InParanoid" id="P12081"/>
<dbReference type="OMA" id="CGGGNFK"/>
<dbReference type="OrthoDB" id="1906957at2759"/>
<dbReference type="PAN-GO" id="P12081">
    <property type="GO annotations" value="6 GO annotations based on evolutionary models"/>
</dbReference>
<dbReference type="PhylomeDB" id="P12081"/>
<dbReference type="TreeFam" id="TF300652"/>
<dbReference type="BRENDA" id="6.1.1.21">
    <property type="organism ID" value="2681"/>
</dbReference>
<dbReference type="PathwayCommons" id="P12081"/>
<dbReference type="Reactome" id="R-HSA-379716">
    <property type="pathway name" value="Cytosolic tRNA aminoacylation"/>
</dbReference>
<dbReference type="SignaLink" id="P12081"/>
<dbReference type="SIGNOR" id="P12081"/>
<dbReference type="BioGRID-ORCS" id="3035">
    <property type="hits" value="768 hits in 1154 CRISPR screens"/>
</dbReference>
<dbReference type="ChiTaRS" id="HARS">
    <property type="organism name" value="human"/>
</dbReference>
<dbReference type="EvolutionaryTrace" id="P12081"/>
<dbReference type="GeneWiki" id="HARS"/>
<dbReference type="GenomeRNAi" id="3035"/>
<dbReference type="Pharos" id="P12081">
    <property type="development level" value="Tchem"/>
</dbReference>
<dbReference type="PRO" id="PR:P12081"/>
<dbReference type="Proteomes" id="UP000005640">
    <property type="component" value="Chromosome 5"/>
</dbReference>
<dbReference type="RNAct" id="P12081">
    <property type="molecule type" value="protein"/>
</dbReference>
<dbReference type="Bgee" id="ENSG00000170445">
    <property type="expression patterns" value="Expressed in lateral nuclear group of thalamus and 198 other cell types or tissues"/>
</dbReference>
<dbReference type="ExpressionAtlas" id="P12081">
    <property type="expression patterns" value="baseline and differential"/>
</dbReference>
<dbReference type="GO" id="GO:0005737">
    <property type="term" value="C:cytoplasm"/>
    <property type="evidence" value="ECO:0000314"/>
    <property type="project" value="WormBase"/>
</dbReference>
<dbReference type="GO" id="GO:0005829">
    <property type="term" value="C:cytosol"/>
    <property type="evidence" value="ECO:0000314"/>
    <property type="project" value="HPA"/>
</dbReference>
<dbReference type="GO" id="GO:0005739">
    <property type="term" value="C:mitochondrion"/>
    <property type="evidence" value="ECO:0000318"/>
    <property type="project" value="GO_Central"/>
</dbReference>
<dbReference type="GO" id="GO:0005524">
    <property type="term" value="F:ATP binding"/>
    <property type="evidence" value="ECO:0000314"/>
    <property type="project" value="UniProtKB"/>
</dbReference>
<dbReference type="GO" id="GO:0004821">
    <property type="term" value="F:histidine-tRNA ligase activity"/>
    <property type="evidence" value="ECO:0000314"/>
    <property type="project" value="UniProtKB"/>
</dbReference>
<dbReference type="GO" id="GO:0042802">
    <property type="term" value="F:identical protein binding"/>
    <property type="evidence" value="ECO:0000353"/>
    <property type="project" value="IntAct"/>
</dbReference>
<dbReference type="GO" id="GO:0042803">
    <property type="term" value="F:protein homodimerization activity"/>
    <property type="evidence" value="ECO:0000314"/>
    <property type="project" value="UniProtKB"/>
</dbReference>
<dbReference type="GO" id="GO:0003723">
    <property type="term" value="F:RNA binding"/>
    <property type="evidence" value="ECO:0000318"/>
    <property type="project" value="GO_Central"/>
</dbReference>
<dbReference type="GO" id="GO:0006427">
    <property type="term" value="P:histidyl-tRNA aminoacylation"/>
    <property type="evidence" value="ECO:0000314"/>
    <property type="project" value="UniProtKB"/>
</dbReference>
<dbReference type="GO" id="GO:0032543">
    <property type="term" value="P:mitochondrial translation"/>
    <property type="evidence" value="ECO:0000318"/>
    <property type="project" value="GO_Central"/>
</dbReference>
<dbReference type="GO" id="GO:0006412">
    <property type="term" value="P:translation"/>
    <property type="evidence" value="ECO:0000303"/>
    <property type="project" value="UniProtKB"/>
</dbReference>
<dbReference type="GO" id="GO:0006418">
    <property type="term" value="P:tRNA aminoacylation for protein translation"/>
    <property type="evidence" value="ECO:0000304"/>
    <property type="project" value="Reactome"/>
</dbReference>
<dbReference type="CDD" id="cd00773">
    <property type="entry name" value="HisRS-like_core"/>
    <property type="match status" value="1"/>
</dbReference>
<dbReference type="CDD" id="cd00859">
    <property type="entry name" value="HisRS_anticodon"/>
    <property type="match status" value="1"/>
</dbReference>
<dbReference type="CDD" id="cd00938">
    <property type="entry name" value="HisRS_RNA"/>
    <property type="match status" value="1"/>
</dbReference>
<dbReference type="DisProt" id="DP01668"/>
<dbReference type="FunFam" id="3.40.50.800:FF:000008">
    <property type="entry name" value="histidine--tRNA ligase, cytoplasmic isoform X1"/>
    <property type="match status" value="1"/>
</dbReference>
<dbReference type="FunFam" id="1.10.287.10:FF:000008">
    <property type="entry name" value="histidine--tRNA ligase, cytoplasmic isoform X6"/>
    <property type="match status" value="1"/>
</dbReference>
<dbReference type="FunFam" id="3.30.930.10:FF:000021">
    <property type="entry name" value="Probable histidine--tRNA ligase, mitochondrial"/>
    <property type="match status" value="1"/>
</dbReference>
<dbReference type="Gene3D" id="3.40.50.800">
    <property type="entry name" value="Anticodon-binding domain"/>
    <property type="match status" value="1"/>
</dbReference>
<dbReference type="Gene3D" id="3.30.930.10">
    <property type="entry name" value="Bira Bifunctional Protein, Domain 2"/>
    <property type="match status" value="1"/>
</dbReference>
<dbReference type="Gene3D" id="1.10.287.10">
    <property type="entry name" value="S15/NS1, RNA-binding"/>
    <property type="match status" value="1"/>
</dbReference>
<dbReference type="HAMAP" id="MF_00127">
    <property type="entry name" value="His_tRNA_synth"/>
    <property type="match status" value="1"/>
</dbReference>
<dbReference type="InterPro" id="IPR006195">
    <property type="entry name" value="aa-tRNA-synth_II"/>
</dbReference>
<dbReference type="InterPro" id="IPR045864">
    <property type="entry name" value="aa-tRNA-synth_II/BPL/LPL"/>
</dbReference>
<dbReference type="InterPro" id="IPR004154">
    <property type="entry name" value="Anticodon-bd"/>
</dbReference>
<dbReference type="InterPro" id="IPR036621">
    <property type="entry name" value="Anticodon-bd_dom_sf"/>
</dbReference>
<dbReference type="InterPro" id="IPR015807">
    <property type="entry name" value="His-tRNA-ligase"/>
</dbReference>
<dbReference type="InterPro" id="IPR041715">
    <property type="entry name" value="HisRS-like_core"/>
</dbReference>
<dbReference type="InterPro" id="IPR004516">
    <property type="entry name" value="HisRS/HisZ"/>
</dbReference>
<dbReference type="InterPro" id="IPR033656">
    <property type="entry name" value="HisRS_anticodon"/>
</dbReference>
<dbReference type="InterPro" id="IPR009068">
    <property type="entry name" value="uS15_NS1_RNA-bd_sf"/>
</dbReference>
<dbReference type="InterPro" id="IPR000738">
    <property type="entry name" value="WHEP-TRS_dom"/>
</dbReference>
<dbReference type="NCBIfam" id="TIGR00442">
    <property type="entry name" value="hisS"/>
    <property type="match status" value="1"/>
</dbReference>
<dbReference type="PANTHER" id="PTHR11476:SF8">
    <property type="entry name" value="HISTIDINE--TRNA LIGASE, CYTOPLASMIC"/>
    <property type="match status" value="1"/>
</dbReference>
<dbReference type="PANTHER" id="PTHR11476">
    <property type="entry name" value="HISTIDYL-TRNA SYNTHETASE"/>
    <property type="match status" value="1"/>
</dbReference>
<dbReference type="Pfam" id="PF03129">
    <property type="entry name" value="HGTP_anticodon"/>
    <property type="match status" value="1"/>
</dbReference>
<dbReference type="Pfam" id="PF13393">
    <property type="entry name" value="tRNA-synt_His"/>
    <property type="match status" value="1"/>
</dbReference>
<dbReference type="Pfam" id="PF00458">
    <property type="entry name" value="WHEP-TRS"/>
    <property type="match status" value="1"/>
</dbReference>
<dbReference type="PIRSF" id="PIRSF001549">
    <property type="entry name" value="His-tRNA_synth"/>
    <property type="match status" value="1"/>
</dbReference>
<dbReference type="SMART" id="SM00991">
    <property type="entry name" value="WHEP-TRS"/>
    <property type="match status" value="1"/>
</dbReference>
<dbReference type="SUPFAM" id="SSF52954">
    <property type="entry name" value="Class II aaRS ABD-related"/>
    <property type="match status" value="1"/>
</dbReference>
<dbReference type="SUPFAM" id="SSF55681">
    <property type="entry name" value="Class II aaRS and biotin synthetases"/>
    <property type="match status" value="1"/>
</dbReference>
<dbReference type="SUPFAM" id="SSF47060">
    <property type="entry name" value="S15/NS1 RNA-binding domain"/>
    <property type="match status" value="1"/>
</dbReference>
<dbReference type="PROSITE" id="PS50862">
    <property type="entry name" value="AA_TRNA_LIGASE_II"/>
    <property type="match status" value="1"/>
</dbReference>
<dbReference type="PROSITE" id="PS00762">
    <property type="entry name" value="WHEP_TRS_1"/>
    <property type="match status" value="1"/>
</dbReference>
<dbReference type="PROSITE" id="PS51185">
    <property type="entry name" value="WHEP_TRS_2"/>
    <property type="match status" value="1"/>
</dbReference>
<accession>P12081</accession>
<accession>B4DHQ1</accession>
<accession>B4DY73</accession>
<accession>D6REN6</accession>
<accession>J3KNE5</accession>
<sequence length="509" mass="57411">MAERAALEELVKLQGERVRGLKQQKASAELIEEEVAKLLKLKAQLGPDESKQKFVLKTPKGTRDYSPRQMAVREKVFDVIIRCFKRHGAEVIDTPVFELKETLMGKYGEDSKLIYDLKDQGGELLSLRYDLTVPFARYLAMNKLTNIKRYHIAKVYRRDNPAMTRGRYREFYQCDFDIAGNFDPMIPDAECLKIMCEILSSLQIGDFLVKVNDRRILDGMFAICGVSDSKFRTICSSVDKLDKVSWEEVKNEMVGEKGLAPEVADRIGDYVQQHGGVSLVEQLLQDPKLSQNKQALEGLGDLKLLFEYLTLFGIDDKISFDLSLARGLDYYTGVIYEAVLLQTPAQAGEEPLGVGSVAAGGRYDGLVGMFDPKGRKVPCVGLSIGVERIFSIVEQRLEALEEKIRTTETQVLVASAQKKLLEERLKLVSELWDAGIKAELLYKKNPKLLNQLQYCEEAGIPLVAIIGEQELKDGVIKLRSVTSREEVDVRREDLVEEIKRRTGQPLCIC</sequence>
<organism>
    <name type="scientific">Homo sapiens</name>
    <name type="common">Human</name>
    <dbReference type="NCBI Taxonomy" id="9606"/>
    <lineage>
        <taxon>Eukaryota</taxon>
        <taxon>Metazoa</taxon>
        <taxon>Chordata</taxon>
        <taxon>Craniata</taxon>
        <taxon>Vertebrata</taxon>
        <taxon>Euteleostomi</taxon>
        <taxon>Mammalia</taxon>
        <taxon>Eutheria</taxon>
        <taxon>Euarchontoglires</taxon>
        <taxon>Primates</taxon>
        <taxon>Haplorrhini</taxon>
        <taxon>Catarrhini</taxon>
        <taxon>Hominidae</taxon>
        <taxon>Homo</taxon>
    </lineage>
</organism>
<reference key="1">
    <citation type="journal article" date="1992" name="Nucleic Acids Res.">
        <title>Human histidyl-tRNA synthetase: recognition of amino acid signature regions in class 2a aminoacyl-tRNA synthetases.</title>
        <authorList>
            <person name="Raben N."/>
            <person name="Borriello F."/>
            <person name="Amin J."/>
            <person name="Horwitz R."/>
            <person name="Fraser D."/>
            <person name="Plotz P."/>
        </authorList>
    </citation>
    <scope>NUCLEOTIDE SEQUENCE [MRNA] (ISOFORM 1)</scope>
</reference>
<reference key="2">
    <citation type="journal article" date="1987" name="Nucleic Acids Res.">
        <title>Isolation, structure and expression of mammalian genes for histidyl-tRNA synthetase.</title>
        <authorList>
            <person name="Tsui F.W.L."/>
            <person name="Siminovitch L."/>
        </authorList>
    </citation>
    <scope>NUCLEOTIDE SEQUENCE [MRNA] (ISOFORM 1)</scope>
</reference>
<reference key="3">
    <citation type="journal article" date="2004" name="Nat. Genet.">
        <title>Complete sequencing and characterization of 21,243 full-length human cDNAs.</title>
        <authorList>
            <person name="Ota T."/>
            <person name="Suzuki Y."/>
            <person name="Nishikawa T."/>
            <person name="Otsuki T."/>
            <person name="Sugiyama T."/>
            <person name="Irie R."/>
            <person name="Wakamatsu A."/>
            <person name="Hayashi K."/>
            <person name="Sato H."/>
            <person name="Nagai K."/>
            <person name="Kimura K."/>
            <person name="Makita H."/>
            <person name="Sekine M."/>
            <person name="Obayashi M."/>
            <person name="Nishi T."/>
            <person name="Shibahara T."/>
            <person name="Tanaka T."/>
            <person name="Ishii S."/>
            <person name="Yamamoto J."/>
            <person name="Saito K."/>
            <person name="Kawai Y."/>
            <person name="Isono Y."/>
            <person name="Nakamura Y."/>
            <person name="Nagahari K."/>
            <person name="Murakami K."/>
            <person name="Yasuda T."/>
            <person name="Iwayanagi T."/>
            <person name="Wagatsuma M."/>
            <person name="Shiratori A."/>
            <person name="Sudo H."/>
            <person name="Hosoiri T."/>
            <person name="Kaku Y."/>
            <person name="Kodaira H."/>
            <person name="Kondo H."/>
            <person name="Sugawara M."/>
            <person name="Takahashi M."/>
            <person name="Kanda K."/>
            <person name="Yokoi T."/>
            <person name="Furuya T."/>
            <person name="Kikkawa E."/>
            <person name="Omura Y."/>
            <person name="Abe K."/>
            <person name="Kamihara K."/>
            <person name="Katsuta N."/>
            <person name="Sato K."/>
            <person name="Tanikawa M."/>
            <person name="Yamazaki M."/>
            <person name="Ninomiya K."/>
            <person name="Ishibashi T."/>
            <person name="Yamashita H."/>
            <person name="Murakawa K."/>
            <person name="Fujimori K."/>
            <person name="Tanai H."/>
            <person name="Kimata M."/>
            <person name="Watanabe M."/>
            <person name="Hiraoka S."/>
            <person name="Chiba Y."/>
            <person name="Ishida S."/>
            <person name="Ono Y."/>
            <person name="Takiguchi S."/>
            <person name="Watanabe S."/>
            <person name="Yosida M."/>
            <person name="Hotuta T."/>
            <person name="Kusano J."/>
            <person name="Kanehori K."/>
            <person name="Takahashi-Fujii A."/>
            <person name="Hara H."/>
            <person name="Tanase T.-O."/>
            <person name="Nomura Y."/>
            <person name="Togiya S."/>
            <person name="Komai F."/>
            <person name="Hara R."/>
            <person name="Takeuchi K."/>
            <person name="Arita M."/>
            <person name="Imose N."/>
            <person name="Musashino K."/>
            <person name="Yuuki H."/>
            <person name="Oshima A."/>
            <person name="Sasaki N."/>
            <person name="Aotsuka S."/>
            <person name="Yoshikawa Y."/>
            <person name="Matsunawa H."/>
            <person name="Ichihara T."/>
            <person name="Shiohata N."/>
            <person name="Sano S."/>
            <person name="Moriya S."/>
            <person name="Momiyama H."/>
            <person name="Satoh N."/>
            <person name="Takami S."/>
            <person name="Terashima Y."/>
            <person name="Suzuki O."/>
            <person name="Nakagawa S."/>
            <person name="Senoh A."/>
            <person name="Mizoguchi H."/>
            <person name="Goto Y."/>
            <person name="Shimizu F."/>
            <person name="Wakebe H."/>
            <person name="Hishigaki H."/>
            <person name="Watanabe T."/>
            <person name="Sugiyama A."/>
            <person name="Takemoto M."/>
            <person name="Kawakami B."/>
            <person name="Yamazaki M."/>
            <person name="Watanabe K."/>
            <person name="Kumagai A."/>
            <person name="Itakura S."/>
            <person name="Fukuzumi Y."/>
            <person name="Fujimori Y."/>
            <person name="Komiyama M."/>
            <person name="Tashiro H."/>
            <person name="Tanigami A."/>
            <person name="Fujiwara T."/>
            <person name="Ono T."/>
            <person name="Yamada K."/>
            <person name="Fujii Y."/>
            <person name="Ozaki K."/>
            <person name="Hirao M."/>
            <person name="Ohmori Y."/>
            <person name="Kawabata A."/>
            <person name="Hikiji T."/>
            <person name="Kobatake N."/>
            <person name="Inagaki H."/>
            <person name="Ikema Y."/>
            <person name="Okamoto S."/>
            <person name="Okitani R."/>
            <person name="Kawakami T."/>
            <person name="Noguchi S."/>
            <person name="Itoh T."/>
            <person name="Shigeta K."/>
            <person name="Senba T."/>
            <person name="Matsumura K."/>
            <person name="Nakajima Y."/>
            <person name="Mizuno T."/>
            <person name="Morinaga M."/>
            <person name="Sasaki M."/>
            <person name="Togashi T."/>
            <person name="Oyama M."/>
            <person name="Hata H."/>
            <person name="Watanabe M."/>
            <person name="Komatsu T."/>
            <person name="Mizushima-Sugano J."/>
            <person name="Satoh T."/>
            <person name="Shirai Y."/>
            <person name="Takahashi Y."/>
            <person name="Nakagawa K."/>
            <person name="Okumura K."/>
            <person name="Nagase T."/>
            <person name="Nomura N."/>
            <person name="Kikuchi H."/>
            <person name="Masuho Y."/>
            <person name="Yamashita R."/>
            <person name="Nakai K."/>
            <person name="Yada T."/>
            <person name="Nakamura Y."/>
            <person name="Ohara O."/>
            <person name="Isogai T."/>
            <person name="Sugano S."/>
        </authorList>
    </citation>
    <scope>NUCLEOTIDE SEQUENCE [LARGE SCALE MRNA] (ISOFORMS 2 AND 3)</scope>
    <source>
        <tissue>Caudate nucleus</tissue>
        <tissue>Testis</tissue>
    </source>
</reference>
<reference key="4">
    <citation type="submission" date="2006-07" db="EMBL/GenBank/DDBJ databases">
        <title>Homo sapiens protein coding cDNA.</title>
        <authorList>
            <person name="Totoki Y."/>
            <person name="Toyoda A."/>
            <person name="Takeda T."/>
            <person name="Sakaki Y."/>
            <person name="Tanaka A."/>
            <person name="Yokoyama S."/>
        </authorList>
    </citation>
    <scope>NUCLEOTIDE SEQUENCE [LARGE SCALE MRNA] (ISOFORM 4)</scope>
    <source>
        <tissue>Brain</tissue>
    </source>
</reference>
<reference key="5">
    <citation type="journal article" date="2004" name="Nature">
        <title>The DNA sequence and comparative analysis of human chromosome 5.</title>
        <authorList>
            <person name="Schmutz J."/>
            <person name="Martin J."/>
            <person name="Terry A."/>
            <person name="Couronne O."/>
            <person name="Grimwood J."/>
            <person name="Lowry S."/>
            <person name="Gordon L.A."/>
            <person name="Scott D."/>
            <person name="Xie G."/>
            <person name="Huang W."/>
            <person name="Hellsten U."/>
            <person name="Tran-Gyamfi M."/>
            <person name="She X."/>
            <person name="Prabhakar S."/>
            <person name="Aerts A."/>
            <person name="Altherr M."/>
            <person name="Bajorek E."/>
            <person name="Black S."/>
            <person name="Branscomb E."/>
            <person name="Caoile C."/>
            <person name="Challacombe J.F."/>
            <person name="Chan Y.M."/>
            <person name="Denys M."/>
            <person name="Detter J.C."/>
            <person name="Escobar J."/>
            <person name="Flowers D."/>
            <person name="Fotopulos D."/>
            <person name="Glavina T."/>
            <person name="Gomez M."/>
            <person name="Gonzales E."/>
            <person name="Goodstein D."/>
            <person name="Grigoriev I."/>
            <person name="Groza M."/>
            <person name="Hammon N."/>
            <person name="Hawkins T."/>
            <person name="Haydu L."/>
            <person name="Israni S."/>
            <person name="Jett J."/>
            <person name="Kadner K."/>
            <person name="Kimball H."/>
            <person name="Kobayashi A."/>
            <person name="Lopez F."/>
            <person name="Lou Y."/>
            <person name="Martinez D."/>
            <person name="Medina C."/>
            <person name="Morgan J."/>
            <person name="Nandkeshwar R."/>
            <person name="Noonan J.P."/>
            <person name="Pitluck S."/>
            <person name="Pollard M."/>
            <person name="Predki P."/>
            <person name="Priest J."/>
            <person name="Ramirez L."/>
            <person name="Retterer J."/>
            <person name="Rodriguez A."/>
            <person name="Rogers S."/>
            <person name="Salamov A."/>
            <person name="Salazar A."/>
            <person name="Thayer N."/>
            <person name="Tice H."/>
            <person name="Tsai M."/>
            <person name="Ustaszewska A."/>
            <person name="Vo N."/>
            <person name="Wheeler J."/>
            <person name="Wu K."/>
            <person name="Yang J."/>
            <person name="Dickson M."/>
            <person name="Cheng J.-F."/>
            <person name="Eichler E.E."/>
            <person name="Olsen A."/>
            <person name="Pennacchio L.A."/>
            <person name="Rokhsar D.S."/>
            <person name="Richardson P."/>
            <person name="Lucas S.M."/>
            <person name="Myers R.M."/>
            <person name="Rubin E.M."/>
        </authorList>
    </citation>
    <scope>NUCLEOTIDE SEQUENCE [LARGE SCALE GENOMIC DNA]</scope>
</reference>
<reference key="6">
    <citation type="journal article" date="2004" name="Genome Res.">
        <title>The status, quality, and expansion of the NIH full-length cDNA project: the Mammalian Gene Collection (MGC).</title>
        <authorList>
            <consortium name="The MGC Project Team"/>
        </authorList>
    </citation>
    <scope>NUCLEOTIDE SEQUENCE [LARGE SCALE MRNA] (ISOFORM 1)</scope>
    <source>
        <tissue>Lung</tissue>
        <tissue>Uterus</tissue>
    </source>
</reference>
<reference key="7">
    <citation type="journal article" date="1993" name="Gene">
        <title>Transcriptional analyses of the gene region that encodes human histidyl-tRNA synthetase: identification of a novel bidirectional regulatory element.</title>
        <authorList>
            <person name="Tsui H.W."/>
            <person name="Mok S."/>
            <person name="de Souza L."/>
            <person name="Martin A."/>
            <person name="Tsui F.W.L."/>
        </authorList>
    </citation>
    <scope>NUCLEOTIDE SEQUENCE [GENOMIC DNA] OF 1-30</scope>
</reference>
<reference key="8">
    <citation type="journal article" date="1995" name="Biochem. Biophys. Res. Commun.">
        <title>A novel gene oriented in a head-to-head configuration with the human histidyl-tRNA synthetase (HRS) gene encodes an mRNA that predicts a polypeptide homologous to HRS.</title>
        <authorList>
            <person name="O'Hanlon T.P."/>
            <person name="Raben N."/>
            <person name="Miller F.W."/>
        </authorList>
    </citation>
    <scope>NUCLEOTIDE SEQUENCE [GENOMIC DNA] OF 1-30</scope>
</reference>
<reference key="9">
    <citation type="journal article" date="2009" name="Anal. Chem.">
        <title>Lys-N and trypsin cover complementary parts of the phosphoproteome in a refined SCX-based approach.</title>
        <authorList>
            <person name="Gauci S."/>
            <person name="Helbig A.O."/>
            <person name="Slijper M."/>
            <person name="Krijgsveld J."/>
            <person name="Heck A.J."/>
            <person name="Mohammed S."/>
        </authorList>
    </citation>
    <scope>ACETYLATION [LARGE SCALE ANALYSIS] AT ALA-2</scope>
    <scope>CLEAVAGE OF INITIATOR METHIONINE [LARGE SCALE ANALYSIS]</scope>
    <scope>IDENTIFICATION BY MASS SPECTROMETRY [LARGE SCALE ANALYSIS]</scope>
</reference>
<reference key="10">
    <citation type="journal article" date="2011" name="BMC Syst. Biol.">
        <title>Initial characterization of the human central proteome.</title>
        <authorList>
            <person name="Burkard T.R."/>
            <person name="Planyavsky M."/>
            <person name="Kaupe I."/>
            <person name="Breitwieser F.P."/>
            <person name="Buerckstuemmer T."/>
            <person name="Bennett K.L."/>
            <person name="Superti-Furga G."/>
            <person name="Colinge J."/>
        </authorList>
    </citation>
    <scope>IDENTIFICATION BY MASS SPECTROMETRY [LARGE SCALE ANALYSIS]</scope>
</reference>
<reference key="11">
    <citation type="journal article" date="2013" name="Hum. Mutat.">
        <title>A loss-of-function variant in the human histidyl-tRNA synthetase (HARS) gene is neurotoxic in vivo.</title>
        <authorList>
            <consortium name="NISC comparative sequencing program"/>
            <person name="Vester A."/>
            <person name="Velez-Ruiz G."/>
            <person name="McLaughlin H.M."/>
            <person name="Lupski J.R."/>
            <person name="Talbot K."/>
            <person name="Vance J.M."/>
            <person name="Zuchner S."/>
            <person name="Roda R.H."/>
            <person name="Fischbeck K.H."/>
            <person name="Biesecker L.G."/>
            <person name="Nicholson G."/>
            <person name="Beg A.A."/>
            <person name="Antonellis A."/>
        </authorList>
    </citation>
    <scope>INVOLVEMENT IN CMT2W</scope>
    <scope>VARIANTS GLU-5; ASP-205 AND ARG-376</scope>
    <scope>VARIANTS CMT2W GLN-137; ALA-238 AND SER-505</scope>
    <scope>CHARACTERIZATION OF VARIANT CMT2W GLN-137</scope>
</reference>
<reference key="12">
    <citation type="journal article" date="2014" name="J. Proteomics">
        <title>An enzyme assisted RP-RPLC approach for in-depth analysis of human liver phosphoproteome.</title>
        <authorList>
            <person name="Bian Y."/>
            <person name="Song C."/>
            <person name="Cheng K."/>
            <person name="Dong M."/>
            <person name="Wang F."/>
            <person name="Huang J."/>
            <person name="Sun D."/>
            <person name="Wang L."/>
            <person name="Ye M."/>
            <person name="Zou H."/>
        </authorList>
    </citation>
    <scope>PHOSPHORYLATION [LARGE SCALE ANALYSIS] AT SER-356</scope>
    <scope>IDENTIFICATION BY MASS SPECTROMETRY [LARGE SCALE ANALYSIS]</scope>
    <source>
        <tissue>Liver</tissue>
    </source>
</reference>
<reference key="13">
    <citation type="journal article" date="2015" name="Brain">
        <title>Loss of function mutations in HARS cause a spectrum of inherited peripheral neuropathies.</title>
        <authorList>
            <person name="Safka Brozkova D."/>
            <person name="Deconinck T."/>
            <person name="Griffin L.B."/>
            <person name="Ferbert A."/>
            <person name="Haberlova J."/>
            <person name="Mazanec R."/>
            <person name="Lassuthova P."/>
            <person name="Roth C."/>
            <person name="Pilunthanakul T."/>
            <person name="Rautenstrauss B."/>
            <person name="Janecke A.R."/>
            <person name="Zavadakova P."/>
            <person name="Chrast R."/>
            <person name="Rivolta C."/>
            <person name="Zuchner S."/>
            <person name="Antonellis A."/>
            <person name="Beg A.A."/>
            <person name="De Jonghe P."/>
            <person name="Senderek J."/>
            <person name="Seeman P."/>
            <person name="Baets J."/>
        </authorList>
    </citation>
    <scope>FUNCTION</scope>
    <scope>INVOLVEMENT IN CMT2W</scope>
    <scope>VARIANTS CMT2W ILE-132; HIS-134; GLU-175 AND TYR-364</scope>
    <scope>CHARACTERIZATION OF VARIANTS CMT2W ILE-132; HIS-134; GLU-175 AND TYR-364</scope>
</reference>
<reference key="14">
    <citation type="submission" date="2005-11" db="PDB data bank">
        <title>Solution structures of the WHEP-TRS domain of human histidyl-tRNA synthetase.</title>
        <authorList>
            <consortium name="RIKEN structural genomics initiative (RSGI)"/>
        </authorList>
    </citation>
    <scope>STRUCTURE BY NMR OF 1-60</scope>
</reference>
<reference evidence="13" key="15">
    <citation type="journal article" date="2014" name="Biochimie">
        <title>Comparison of histidine recognition in human and trypanosomatid histidyl-tRNA synthetases.</title>
        <authorList>
            <person name="Koh C.Y."/>
            <person name="Wetzel A.B."/>
            <person name="de van der Schueren W.J."/>
            <person name="Hol W.G."/>
        </authorList>
    </citation>
    <scope>X-RAY CRYSTALLOGRAPHY (2.84 ANGSTROMS) IN COMPLEX WITH L-HISTIDINE</scope>
    <scope>SUBUNIT</scope>
</reference>
<reference evidence="14" key="16">
    <citation type="journal article" date="2015" name="Biodesign">
        <title>Structural characteristics of human histidyl-tRNA synthetase.</title>
        <authorList>
            <person name="Kim Y.K."/>
            <person name="Chang J.E."/>
            <person name="Kim S."/>
            <person name="Jeon Y.H."/>
        </authorList>
    </citation>
    <scope>X-RAY CRYSTALLOGRAPHY (2.80 ANGSTROMS)</scope>
    <scope>SUBUNIT</scope>
</reference>
<reference key="17">
    <citation type="journal article" date="2012" name="PLoS ONE">
        <title>Genetic mapping and exome sequencing identify variants associated with five novel diseases.</title>
        <authorList>
            <person name="Puffenberger E.G."/>
            <person name="Jinks R.N."/>
            <person name="Sougnez C."/>
            <person name="Cibulskis K."/>
            <person name="Willert R.A."/>
            <person name="Achilly N.P."/>
            <person name="Cassidy R.P."/>
            <person name="Fiorentini C.J."/>
            <person name="Heiken K.F."/>
            <person name="Lawrence J.J."/>
            <person name="Mahoney M.H."/>
            <person name="Miller C.J."/>
            <person name="Nair D.T."/>
            <person name="Politi K.A."/>
            <person name="Worcester K.N."/>
            <person name="Setton R.A."/>
            <person name="Dipiazza R."/>
            <person name="Sherman E.A."/>
            <person name="Eastman J.T."/>
            <person name="Francklyn C."/>
            <person name="Robey-Bond S."/>
            <person name="Rider N.L."/>
            <person name="Gabriel S."/>
            <person name="Morton D.H."/>
            <person name="Strauss K.A."/>
        </authorList>
    </citation>
    <scope>VARIANT USH3B SER-454</scope>
</reference>
<reference key="18">
    <citation type="journal article" date="2018" name="Hum. Mutat.">
        <title>Substrate interaction defects in histidyl-tRNA synthetase linked to dominant axonal peripheral neuropathy.</title>
        <authorList>
            <person name="Abbott J.A."/>
            <person name="Meyer-Schuman R."/>
            <person name="Lupo V."/>
            <person name="Feely S."/>
            <person name="Mademan I."/>
            <person name="Oprescu S.N."/>
            <person name="Griffin L.B."/>
            <person name="Alberti M.A."/>
            <person name="Casasnovas C."/>
            <person name="Aharoni S."/>
            <person name="Basel-Vanagaite L."/>
            <person name="Zuechner S."/>
            <person name="De Jonghe P."/>
            <person name="Baets J."/>
            <person name="Shy M.E."/>
            <person name="Espinos C."/>
            <person name="Demeler B."/>
            <person name="Antonellis A."/>
            <person name="Francklyn C."/>
        </authorList>
    </citation>
    <scope>VARIANTS CMT2W GLY-155; CYS-330 AND ASN-356</scope>
    <scope>CHARACTERIZATION OF VARIANTS CMT2W GLY-155; CYS-330 AND ASN-356</scope>
    <scope>CATALYTIC ACTIVITY</scope>
    <scope>FUNCTION</scope>
    <scope>BIOPHYSICOCHEMICAL PROPERTIES</scope>
    <scope>SUBUNIT</scope>
</reference>
<protein>
    <recommendedName>
        <fullName>Histidine--tRNA ligase, cytoplasmic</fullName>
        <ecNumber evidence="7">6.1.1.21</ecNumber>
    </recommendedName>
    <alternativeName>
        <fullName>Histidyl-tRNA synthetase</fullName>
        <shortName>HisRS</shortName>
    </alternativeName>
</protein>
<keyword id="KW-0002">3D-structure</keyword>
<keyword id="KW-0007">Acetylation</keyword>
<keyword id="KW-0025">Alternative splicing</keyword>
<keyword id="KW-0030">Aminoacyl-tRNA synthetase</keyword>
<keyword id="KW-0067">ATP-binding</keyword>
<keyword id="KW-0144">Charcot-Marie-Tooth disease</keyword>
<keyword id="KW-0963">Cytoplasm</keyword>
<keyword id="KW-0209">Deafness</keyword>
<keyword id="KW-0225">Disease variant</keyword>
<keyword id="KW-0436">Ligase</keyword>
<keyword id="KW-0523">Neurodegeneration</keyword>
<keyword id="KW-0622">Neuropathy</keyword>
<keyword id="KW-0547">Nucleotide-binding</keyword>
<keyword id="KW-0597">Phosphoprotein</keyword>
<keyword id="KW-0648">Protein biosynthesis</keyword>
<keyword id="KW-1267">Proteomics identification</keyword>
<keyword id="KW-1185">Reference proteome</keyword>
<keyword id="KW-0682">Retinitis pigmentosa</keyword>
<keyword id="KW-0836">Usher syndrome</keyword>
<feature type="initiator methionine" description="Removed" evidence="15">
    <location>
        <position position="1"/>
    </location>
</feature>
<feature type="chain" id="PRO_0000136332" description="Histidine--tRNA ligase, cytoplasmic">
    <location>
        <begin position="2"/>
        <end position="509"/>
    </location>
</feature>
<feature type="domain" description="WHEP-TRS">
    <location>
        <begin position="3"/>
        <end position="59"/>
    </location>
</feature>
<feature type="binding site" evidence="5 13">
    <location>
        <begin position="130"/>
        <end position="132"/>
    </location>
    <ligand>
        <name>L-histidine</name>
        <dbReference type="ChEBI" id="CHEBI:57595"/>
    </ligand>
</feature>
<feature type="binding site" evidence="5 13">
    <location>
        <position position="157"/>
    </location>
    <ligand>
        <name>L-histidine</name>
        <dbReference type="ChEBI" id="CHEBI:57595"/>
    </ligand>
</feature>
<feature type="binding site" evidence="5 13">
    <location>
        <position position="173"/>
    </location>
    <ligand>
        <name>L-histidine</name>
        <dbReference type="ChEBI" id="CHEBI:57595"/>
    </ligand>
</feature>
<feature type="binding site" evidence="5 13">
    <location>
        <position position="177"/>
    </location>
    <ligand>
        <name>L-histidine</name>
        <dbReference type="ChEBI" id="CHEBI:57595"/>
    </ligand>
</feature>
<feature type="binding site" evidence="5 13">
    <location>
        <position position="326"/>
    </location>
    <ligand>
        <name>L-histidine</name>
        <dbReference type="ChEBI" id="CHEBI:57595"/>
    </ligand>
</feature>
<feature type="binding site" evidence="5 13">
    <location>
        <begin position="330"/>
        <end position="331"/>
    </location>
    <ligand>
        <name>L-histidine</name>
        <dbReference type="ChEBI" id="CHEBI:57595"/>
    </ligand>
</feature>
<feature type="modified residue" description="N-acetylalanine" evidence="15">
    <location>
        <position position="2"/>
    </location>
</feature>
<feature type="modified residue" description="Phosphoserine" evidence="2">
    <location>
        <position position="66"/>
    </location>
</feature>
<feature type="modified residue" description="Phosphoserine" evidence="16">
    <location>
        <position position="356"/>
    </location>
</feature>
<feature type="splice variant" id="VSP_045118" description="In isoform 2 and isoform 3." evidence="9">
    <location>
        <begin position="60"/>
        <end position="99"/>
    </location>
</feature>
<feature type="splice variant" id="VSP_046662" description="In isoform 3 and isoform 4." evidence="9 10">
    <location>
        <begin position="155"/>
        <end position="174"/>
    </location>
</feature>
<feature type="sequence variant" id="VAR_069021" description="In dbSNP:rs78741041." evidence="4">
    <original>A</original>
    <variation>E</variation>
    <location>
        <position position="5"/>
    </location>
</feature>
<feature type="sequence variant" id="VAR_075064" description="In CMT2W; loss-of-function variant; dbSNP:rs143473232." evidence="6">
    <original>T</original>
    <variation>I</variation>
    <location>
        <position position="132"/>
    </location>
</feature>
<feature type="sequence variant" id="VAR_075065" description="In CMT2W; loss-of-function variant; dbSNP:rs863225122." evidence="6">
    <original>P</original>
    <variation>H</variation>
    <location>
        <position position="134"/>
    </location>
</feature>
<feature type="sequence variant" id="VAR_069022" description="In CMT2W; has a neurotoxic effect in an animal model; results in loss of function; dbSNP:rs191391414." evidence="4">
    <original>R</original>
    <variation>Q</variation>
    <location>
        <position position="137"/>
    </location>
</feature>
<feature type="sequence variant" id="VAR_083003" description="In CMT2W; uncertain significance; fails to complement deletion of the yeast ortholog; decreases histidine-tRNA ligase activity; increases in the KM for ATP binding; does not disrupt dimerization; dbSNP:rs1239341211." evidence="7">
    <original>V</original>
    <variation>G</variation>
    <location>
        <position position="155"/>
    </location>
</feature>
<feature type="sequence variant" id="VAR_075066" description="In CMT2W; hypomorphic variant; dbSNP:rs863225123." evidence="6">
    <original>D</original>
    <variation>E</variation>
    <location>
        <position position="175"/>
    </location>
</feature>
<feature type="sequence variant" id="VAR_069023" description="In dbSNP:rs147288996." evidence="4">
    <original>G</original>
    <variation>D</variation>
    <location>
        <position position="205"/>
    </location>
</feature>
<feature type="sequence variant" id="VAR_069024" description="In CMT2W; uncertain significance; dbSNP:rs536175170." evidence="4">
    <original>V</original>
    <variation>A</variation>
    <location>
        <position position="238"/>
    </location>
</feature>
<feature type="sequence variant" id="VAR_083004" description="In CMT2W; fails to complement deletion of the yeast ortholog; decreases histidine-tRNA ligase activity; increases in the KM for ATP binding; does not disrupt dimerization; dbSNP:rs1554106881." evidence="7">
    <original>Y</original>
    <variation>C</variation>
    <location>
        <position position="330"/>
    </location>
</feature>
<feature type="sequence variant" id="VAR_083005" description="In CMT2W; uncertain significance; fails to complement deletion of the yeast ortholog; decreases histidine-tRNA ligase activity; increases in the KM for ATP binding; does not disrupt dimerization; dbSNP:rs144322728." evidence="7">
    <original>S</original>
    <variation>N</variation>
    <location>
        <position position="356"/>
    </location>
</feature>
<feature type="sequence variant" id="VAR_075067" description="In CMT2W; loss-of-function variant; dbSNP:rs863225124." evidence="6">
    <original>D</original>
    <variation>Y</variation>
    <location>
        <position position="364"/>
    </location>
</feature>
<feature type="sequence variant" id="VAR_069025" description="In dbSNP:rs139447495." evidence="4">
    <original>K</original>
    <variation>R</variation>
    <location>
        <position position="376"/>
    </location>
</feature>
<feature type="sequence variant" id="VAR_061908" description="In dbSNP:rs34732372.">
    <original>A</original>
    <variation>V</variation>
    <location>
        <position position="399"/>
    </location>
</feature>
<feature type="sequence variant" id="VAR_067918" description="In USH3B; uncertain significance; dbSNP:rs387906639." evidence="3">
    <original>Y</original>
    <variation>S</variation>
    <location>
        <position position="454"/>
    </location>
</feature>
<feature type="sequence variant" id="VAR_069026" description="In CMT2W; uncertain significance; dbSNP:rs747156884." evidence="4">
    <original>P</original>
    <variation>S</variation>
    <location>
        <position position="505"/>
    </location>
</feature>
<feature type="sequence conflict" description="In Ref. 2; CAA28956." evidence="11" ref="2">
    <original>A</original>
    <variation>P</variation>
    <location>
        <position position="6"/>
    </location>
</feature>
<feature type="sequence conflict" description="In Ref. 3; BAG58213." evidence="11" ref="3">
    <original>S</original>
    <variation>P</variation>
    <location>
        <position position="126"/>
    </location>
</feature>
<feature type="sequence conflict" description="In Ref. 2; CAA28956." evidence="11" ref="2">
    <original>R</original>
    <variation>G</variation>
    <location>
        <position position="165"/>
    </location>
</feature>
<feature type="sequence conflict" description="In Ref. 2; CAA28956." evidence="11" ref="2">
    <original>N</original>
    <variation>Q</variation>
    <location>
        <position position="181"/>
    </location>
</feature>
<feature type="sequence conflict" description="In Ref. 2; CAA28956." evidence="11" ref="2">
    <original>I</original>
    <variation>N</variation>
    <location>
        <position position="186"/>
    </location>
</feature>
<feature type="sequence conflict" description="In Ref. 2; CAA28956." evidence="11" ref="2">
    <original>C</original>
    <variation>S</variation>
    <location>
        <position position="191"/>
    </location>
</feature>
<feature type="sequence conflict" description="In Ref. 2; CAA28956." evidence="11" ref="2">
    <original>D</original>
    <variation>N</variation>
    <location>
        <position position="206"/>
    </location>
</feature>
<feature type="sequence conflict" description="In Ref. 2; CAA28956." evidence="11" ref="2">
    <original>I</original>
    <variation>V</variation>
    <location>
        <position position="223"/>
    </location>
</feature>
<feature type="sequence conflict" description="In Ref. 2; CAA28956." evidence="11" ref="2">
    <original>S</original>
    <variation>P</variation>
    <location>
        <position position="227"/>
    </location>
</feature>
<feature type="sequence conflict" description="In Ref. 2; CAA28956." evidence="11" ref="2">
    <original>L</original>
    <variation>V</variation>
    <location>
        <position position="284"/>
    </location>
</feature>
<feature type="sequence conflict" description="In Ref. 2; CAA28956." evidence="11" ref="2">
    <original>A</original>
    <variation>E</variation>
    <location>
        <position position="347"/>
    </location>
</feature>
<feature type="sequence conflict" description="In Ref. 2; CAA28956." evidence="11" ref="2">
    <original>KG</original>
    <variation>QR</variation>
    <location>
        <begin position="373"/>
        <end position="374"/>
    </location>
</feature>
<feature type="sequence conflict" description="In Ref. 3; BAG58213." evidence="11" ref="3">
    <original>R</original>
    <variation>L</variation>
    <location>
        <position position="375"/>
    </location>
</feature>
<feature type="sequence conflict" description="In Ref. 2; CAA28956." evidence="11" ref="2">
    <original>D</original>
    <variation>E</variation>
    <location>
        <position position="493"/>
    </location>
</feature>
<feature type="helix" evidence="21">
    <location>
        <begin position="3"/>
        <end position="23"/>
    </location>
</feature>
<feature type="helix" evidence="21">
    <location>
        <begin position="28"/>
        <end position="44"/>
    </location>
</feature>
<feature type="helix" evidence="17">
    <location>
        <begin position="67"/>
        <end position="86"/>
    </location>
</feature>
<feature type="strand" evidence="17">
    <location>
        <begin position="96"/>
        <end position="99"/>
    </location>
</feature>
<feature type="helix" evidence="17">
    <location>
        <begin position="100"/>
        <end position="103"/>
    </location>
</feature>
<feature type="turn" evidence="19">
    <location>
        <begin position="104"/>
        <end position="106"/>
    </location>
</feature>
<feature type="helix" evidence="19">
    <location>
        <begin position="109"/>
        <end position="113"/>
    </location>
</feature>
<feature type="strand" evidence="20">
    <location>
        <begin position="120"/>
        <end position="122"/>
    </location>
</feature>
<feature type="strand" evidence="17">
    <location>
        <begin position="125"/>
        <end position="127"/>
    </location>
</feature>
<feature type="helix" evidence="17">
    <location>
        <begin position="132"/>
        <end position="141"/>
    </location>
</feature>
<feature type="strand" evidence="17">
    <location>
        <begin position="147"/>
        <end position="156"/>
    </location>
</feature>
<feature type="strand" evidence="21">
    <location>
        <begin position="163"/>
        <end position="166"/>
    </location>
</feature>
<feature type="strand" evidence="17">
    <location>
        <begin position="169"/>
        <end position="180"/>
    </location>
</feature>
<feature type="helix" evidence="17">
    <location>
        <begin position="186"/>
        <end position="202"/>
    </location>
</feature>
<feature type="strand" evidence="17">
    <location>
        <begin position="207"/>
        <end position="213"/>
    </location>
</feature>
<feature type="helix" evidence="17">
    <location>
        <begin position="214"/>
        <end position="224"/>
    </location>
</feature>
<feature type="helix" evidence="17">
    <location>
        <begin position="228"/>
        <end position="238"/>
    </location>
</feature>
<feature type="helix" evidence="17">
    <location>
        <begin position="239"/>
        <end position="242"/>
    </location>
</feature>
<feature type="helix" evidence="17">
    <location>
        <begin position="246"/>
        <end position="255"/>
    </location>
</feature>
<feature type="helix" evidence="17">
    <location>
        <begin position="261"/>
        <end position="271"/>
    </location>
</feature>
<feature type="strand" evidence="17">
    <location>
        <begin position="274"/>
        <end position="276"/>
    </location>
</feature>
<feature type="helix" evidence="17">
    <location>
        <begin position="277"/>
        <end position="283"/>
    </location>
</feature>
<feature type="helix" evidence="17">
    <location>
        <begin position="287"/>
        <end position="290"/>
    </location>
</feature>
<feature type="helix" evidence="17">
    <location>
        <begin position="293"/>
        <end position="311"/>
    </location>
</feature>
<feature type="helix" evidence="17">
    <location>
        <begin position="315"/>
        <end position="317"/>
    </location>
</feature>
<feature type="strand" evidence="17">
    <location>
        <begin position="318"/>
        <end position="321"/>
    </location>
</feature>
<feature type="turn" evidence="17">
    <location>
        <begin position="328"/>
        <end position="330"/>
    </location>
</feature>
<feature type="strand" evidence="17">
    <location>
        <begin position="332"/>
        <end position="342"/>
    </location>
</feature>
<feature type="strand" evidence="17">
    <location>
        <begin position="352"/>
        <end position="362"/>
    </location>
</feature>
<feature type="helix" evidence="17">
    <location>
        <begin position="367"/>
        <end position="369"/>
    </location>
</feature>
<feature type="strand" evidence="18">
    <location>
        <begin position="371"/>
        <end position="373"/>
    </location>
</feature>
<feature type="strand" evidence="17">
    <location>
        <begin position="379"/>
        <end position="384"/>
    </location>
</feature>
<feature type="helix" evidence="17">
    <location>
        <begin position="386"/>
        <end position="398"/>
    </location>
</feature>
<feature type="turn" evidence="17">
    <location>
        <begin position="399"/>
        <end position="401"/>
    </location>
</feature>
<feature type="strand" evidence="17">
    <location>
        <begin position="411"/>
        <end position="414"/>
    </location>
</feature>
<feature type="strand" evidence="17">
    <location>
        <begin position="416"/>
        <end position="419"/>
    </location>
</feature>
<feature type="helix" evidence="17">
    <location>
        <begin position="421"/>
        <end position="433"/>
    </location>
</feature>
<feature type="strand" evidence="21">
    <location>
        <begin position="438"/>
        <end position="440"/>
    </location>
</feature>
<feature type="strand" evidence="20">
    <location>
        <begin position="442"/>
        <end position="445"/>
    </location>
</feature>
<feature type="helix" evidence="17">
    <location>
        <begin position="448"/>
        <end position="458"/>
    </location>
</feature>
<feature type="strand" evidence="17">
    <location>
        <begin position="462"/>
        <end position="465"/>
    </location>
</feature>
<feature type="helix" evidence="17">
    <location>
        <begin position="468"/>
        <end position="473"/>
    </location>
</feature>
<feature type="strand" evidence="17">
    <location>
        <begin position="475"/>
        <end position="480"/>
    </location>
</feature>
<feature type="turn" evidence="17">
    <location>
        <begin position="481"/>
        <end position="483"/>
    </location>
</feature>
<feature type="strand" evidence="17">
    <location>
        <begin position="486"/>
        <end position="490"/>
    </location>
</feature>
<feature type="helix" evidence="17">
    <location>
        <begin position="491"/>
        <end position="493"/>
    </location>
</feature>
<feature type="helix" evidence="17">
    <location>
        <begin position="494"/>
        <end position="502"/>
    </location>
</feature>
<proteinExistence type="evidence at protein level"/>
<name>HARS1_HUMAN</name>
<evidence type="ECO:0000250" key="1">
    <source>
        <dbReference type="UniProtKB" id="F1Q5D5"/>
    </source>
</evidence>
<evidence type="ECO:0000250" key="2">
    <source>
        <dbReference type="UniProtKB" id="Q99KK9"/>
    </source>
</evidence>
<evidence type="ECO:0000269" key="3">
    <source>
    </source>
</evidence>
<evidence type="ECO:0000269" key="4">
    <source>
    </source>
</evidence>
<evidence type="ECO:0000269" key="5">
    <source>
    </source>
</evidence>
<evidence type="ECO:0000269" key="6">
    <source>
    </source>
</evidence>
<evidence type="ECO:0000269" key="7">
    <source>
    </source>
</evidence>
<evidence type="ECO:0000269" key="8">
    <source ref="16"/>
</evidence>
<evidence type="ECO:0000303" key="9">
    <source>
    </source>
</evidence>
<evidence type="ECO:0000303" key="10">
    <source ref="4"/>
</evidence>
<evidence type="ECO:0000305" key="11"/>
<evidence type="ECO:0000312" key="12">
    <source>
        <dbReference type="HGNC" id="HGNC:4816"/>
    </source>
</evidence>
<evidence type="ECO:0007744" key="13">
    <source>
        <dbReference type="PDB" id="4PHC"/>
    </source>
</evidence>
<evidence type="ECO:0007744" key="14">
    <source>
        <dbReference type="PDB" id="4X5O"/>
    </source>
</evidence>
<evidence type="ECO:0007744" key="15">
    <source>
    </source>
</evidence>
<evidence type="ECO:0007744" key="16">
    <source>
    </source>
</evidence>
<evidence type="ECO:0007829" key="17">
    <source>
        <dbReference type="PDB" id="4G84"/>
    </source>
</evidence>
<evidence type="ECO:0007829" key="18">
    <source>
        <dbReference type="PDB" id="4G85"/>
    </source>
</evidence>
<evidence type="ECO:0007829" key="19">
    <source>
        <dbReference type="PDB" id="4PHC"/>
    </source>
</evidence>
<evidence type="ECO:0007829" key="20">
    <source>
        <dbReference type="PDB" id="4X5O"/>
    </source>
</evidence>
<evidence type="ECO:0007829" key="21">
    <source>
        <dbReference type="PDB" id="6O76"/>
    </source>
</evidence>